<reference key="1">
    <citation type="journal article" date="2008" name="BMC Genomics">
        <title>The genome sequence of the fish pathogen Aliivibrio salmonicida strain LFI1238 shows extensive evidence of gene decay.</title>
        <authorList>
            <person name="Hjerde E."/>
            <person name="Lorentzen M.S."/>
            <person name="Holden M.T."/>
            <person name="Seeger K."/>
            <person name="Paulsen S."/>
            <person name="Bason N."/>
            <person name="Churcher C."/>
            <person name="Harris D."/>
            <person name="Norbertczak H."/>
            <person name="Quail M.A."/>
            <person name="Sanders S."/>
            <person name="Thurston S."/>
            <person name="Parkhill J."/>
            <person name="Willassen N.P."/>
            <person name="Thomson N.R."/>
        </authorList>
    </citation>
    <scope>NUCLEOTIDE SEQUENCE [LARGE SCALE GENOMIC DNA]</scope>
    <source>
        <strain>LFI1238</strain>
    </source>
</reference>
<protein>
    <recommendedName>
        <fullName evidence="1">Ketol-acid reductoisomerase (NADP(+))</fullName>
        <shortName evidence="1">KARI</shortName>
        <ecNumber evidence="1">1.1.1.86</ecNumber>
    </recommendedName>
    <alternativeName>
        <fullName evidence="1">Acetohydroxy-acid isomeroreductase</fullName>
        <shortName evidence="1">AHIR</shortName>
    </alternativeName>
    <alternativeName>
        <fullName evidence="1">Alpha-keto-beta-hydroxylacyl reductoisomerase</fullName>
    </alternativeName>
    <alternativeName>
        <fullName evidence="1">Ketol-acid reductoisomerase type 2</fullName>
    </alternativeName>
    <alternativeName>
        <fullName evidence="1">Ketol-acid reductoisomerase type II</fullName>
    </alternativeName>
</protein>
<evidence type="ECO:0000255" key="1">
    <source>
        <dbReference type="HAMAP-Rule" id="MF_00435"/>
    </source>
</evidence>
<evidence type="ECO:0000255" key="2">
    <source>
        <dbReference type="PROSITE-ProRule" id="PRU01197"/>
    </source>
</evidence>
<evidence type="ECO:0000255" key="3">
    <source>
        <dbReference type="PROSITE-ProRule" id="PRU01198"/>
    </source>
</evidence>
<dbReference type="EC" id="1.1.1.86" evidence="1"/>
<dbReference type="EMBL" id="FM178379">
    <property type="protein sequence ID" value="CAQ77772.1"/>
    <property type="molecule type" value="Genomic_DNA"/>
</dbReference>
<dbReference type="RefSeq" id="WP_012548983.1">
    <property type="nucleotide sequence ID" value="NC_011312.1"/>
</dbReference>
<dbReference type="SMR" id="B6EP33"/>
<dbReference type="KEGG" id="vsa:VSAL_I0087"/>
<dbReference type="eggNOG" id="COG0059">
    <property type="taxonomic scope" value="Bacteria"/>
</dbReference>
<dbReference type="HOGENOM" id="CLU_551905_0_0_6"/>
<dbReference type="UniPathway" id="UPA00047">
    <property type="reaction ID" value="UER00056"/>
</dbReference>
<dbReference type="UniPathway" id="UPA00049">
    <property type="reaction ID" value="UER00060"/>
</dbReference>
<dbReference type="Proteomes" id="UP000001730">
    <property type="component" value="Chromosome 1"/>
</dbReference>
<dbReference type="GO" id="GO:0005829">
    <property type="term" value="C:cytosol"/>
    <property type="evidence" value="ECO:0007669"/>
    <property type="project" value="TreeGrafter"/>
</dbReference>
<dbReference type="GO" id="GO:0004455">
    <property type="term" value="F:ketol-acid reductoisomerase activity"/>
    <property type="evidence" value="ECO:0007669"/>
    <property type="project" value="UniProtKB-UniRule"/>
</dbReference>
<dbReference type="GO" id="GO:0000287">
    <property type="term" value="F:magnesium ion binding"/>
    <property type="evidence" value="ECO:0007669"/>
    <property type="project" value="UniProtKB-UniRule"/>
</dbReference>
<dbReference type="GO" id="GO:0009097">
    <property type="term" value="P:isoleucine biosynthetic process"/>
    <property type="evidence" value="ECO:0007669"/>
    <property type="project" value="UniProtKB-UniRule"/>
</dbReference>
<dbReference type="GO" id="GO:0009099">
    <property type="term" value="P:L-valine biosynthetic process"/>
    <property type="evidence" value="ECO:0007669"/>
    <property type="project" value="UniProtKB-UniRule"/>
</dbReference>
<dbReference type="FunFam" id="1.10.1040.10:FF:000007">
    <property type="entry name" value="Ketol-acid reductoisomerase (NADP(+))"/>
    <property type="match status" value="1"/>
</dbReference>
<dbReference type="FunFam" id="3.40.50.720:FF:000043">
    <property type="entry name" value="Ketol-acid reductoisomerase (NADP(+))"/>
    <property type="match status" value="1"/>
</dbReference>
<dbReference type="Gene3D" id="1.10.1040.10">
    <property type="entry name" value="N-(1-d-carboxylethyl)-l-norvaline Dehydrogenase, domain 2"/>
    <property type="match status" value="1"/>
</dbReference>
<dbReference type="Gene3D" id="3.40.50.720">
    <property type="entry name" value="NAD(P)-binding Rossmann-like Domain"/>
    <property type="match status" value="1"/>
</dbReference>
<dbReference type="HAMAP" id="MF_00435">
    <property type="entry name" value="IlvC"/>
    <property type="match status" value="1"/>
</dbReference>
<dbReference type="InterPro" id="IPR008927">
    <property type="entry name" value="6-PGluconate_DH-like_C_sf"/>
</dbReference>
<dbReference type="InterPro" id="IPR013328">
    <property type="entry name" value="6PGD_dom2"/>
</dbReference>
<dbReference type="InterPro" id="IPR013023">
    <property type="entry name" value="KARI"/>
</dbReference>
<dbReference type="InterPro" id="IPR000506">
    <property type="entry name" value="KARI_C"/>
</dbReference>
<dbReference type="InterPro" id="IPR013116">
    <property type="entry name" value="KARI_N"/>
</dbReference>
<dbReference type="InterPro" id="IPR036291">
    <property type="entry name" value="NAD(P)-bd_dom_sf"/>
</dbReference>
<dbReference type="NCBIfam" id="TIGR00465">
    <property type="entry name" value="ilvC"/>
    <property type="match status" value="1"/>
</dbReference>
<dbReference type="NCBIfam" id="NF003557">
    <property type="entry name" value="PRK05225.1"/>
    <property type="match status" value="1"/>
</dbReference>
<dbReference type="PANTHER" id="PTHR21371">
    <property type="entry name" value="KETOL-ACID REDUCTOISOMERASE, MITOCHONDRIAL"/>
    <property type="match status" value="1"/>
</dbReference>
<dbReference type="PANTHER" id="PTHR21371:SF1">
    <property type="entry name" value="KETOL-ACID REDUCTOISOMERASE, MITOCHONDRIAL"/>
    <property type="match status" value="1"/>
</dbReference>
<dbReference type="Pfam" id="PF01450">
    <property type="entry name" value="KARI_C"/>
    <property type="match status" value="2"/>
</dbReference>
<dbReference type="Pfam" id="PF07991">
    <property type="entry name" value="KARI_N"/>
    <property type="match status" value="1"/>
</dbReference>
<dbReference type="SUPFAM" id="SSF48179">
    <property type="entry name" value="6-phosphogluconate dehydrogenase C-terminal domain-like"/>
    <property type="match status" value="2"/>
</dbReference>
<dbReference type="SUPFAM" id="SSF51735">
    <property type="entry name" value="NAD(P)-binding Rossmann-fold domains"/>
    <property type="match status" value="1"/>
</dbReference>
<dbReference type="PROSITE" id="PS51851">
    <property type="entry name" value="KARI_C"/>
    <property type="match status" value="2"/>
</dbReference>
<dbReference type="PROSITE" id="PS51850">
    <property type="entry name" value="KARI_N"/>
    <property type="match status" value="1"/>
</dbReference>
<gene>
    <name evidence="1" type="primary">ilvC</name>
    <name type="ordered locus">VSAL_I0087</name>
</gene>
<comment type="function">
    <text evidence="1">Involved in the biosynthesis of branched-chain amino acids (BCAA). Catalyzes an alkyl-migration followed by a ketol-acid reduction of (S)-2-acetolactate (S2AL) to yield (R)-2,3-dihydroxy-isovalerate. In the isomerase reaction, S2AL is rearranged via a Mg-dependent methyl migration to produce 3-hydroxy-3-methyl-2-ketobutyrate (HMKB). In the reductase reaction, this 2-ketoacid undergoes a metal-dependent reduction by NADPH to yield (R)-2,3-dihydroxy-isovalerate.</text>
</comment>
<comment type="catalytic activity">
    <reaction evidence="1">
        <text>(2R)-2,3-dihydroxy-3-methylbutanoate + NADP(+) = (2S)-2-acetolactate + NADPH + H(+)</text>
        <dbReference type="Rhea" id="RHEA:22068"/>
        <dbReference type="ChEBI" id="CHEBI:15378"/>
        <dbReference type="ChEBI" id="CHEBI:49072"/>
        <dbReference type="ChEBI" id="CHEBI:57783"/>
        <dbReference type="ChEBI" id="CHEBI:58349"/>
        <dbReference type="ChEBI" id="CHEBI:58476"/>
        <dbReference type="EC" id="1.1.1.86"/>
    </reaction>
</comment>
<comment type="catalytic activity">
    <reaction evidence="1">
        <text>(2R,3R)-2,3-dihydroxy-3-methylpentanoate + NADP(+) = (S)-2-ethyl-2-hydroxy-3-oxobutanoate + NADPH + H(+)</text>
        <dbReference type="Rhea" id="RHEA:13493"/>
        <dbReference type="ChEBI" id="CHEBI:15378"/>
        <dbReference type="ChEBI" id="CHEBI:49256"/>
        <dbReference type="ChEBI" id="CHEBI:49258"/>
        <dbReference type="ChEBI" id="CHEBI:57783"/>
        <dbReference type="ChEBI" id="CHEBI:58349"/>
        <dbReference type="EC" id="1.1.1.86"/>
    </reaction>
</comment>
<comment type="cofactor">
    <cofactor evidence="1">
        <name>Mg(2+)</name>
        <dbReference type="ChEBI" id="CHEBI:18420"/>
    </cofactor>
    <text evidence="1">Binds 2 magnesium ions per subunit.</text>
</comment>
<comment type="pathway">
    <text evidence="1">Amino-acid biosynthesis; L-isoleucine biosynthesis; L-isoleucine from 2-oxobutanoate: step 2/4.</text>
</comment>
<comment type="pathway">
    <text evidence="1">Amino-acid biosynthesis; L-valine biosynthesis; L-valine from pyruvate: step 2/4.</text>
</comment>
<comment type="similarity">
    <text evidence="1">Belongs to the ketol-acid reductoisomerase family.</text>
</comment>
<name>ILVC_ALISL</name>
<sequence>MSNYFDTLNLREQLDQLGRCRFMDREEFSTEADYLKGKRVVIVGCGAQGLNQGLNMRDSGLNVAYALRQAAIDEQRQSFKNASENGFEVASYEKLIPQADLVINLTPDKQHTNVVETVMPLMKEGATLGYSHGFNIVEEGMKIRKDLTVVMVAPKCPGTEVREEYKRGFGVPTLIAVHPENDPKGEGWDIAKAWAAGTGGHRAGCLESSFVAEVKSDLMGEQTILCGMLQAGSIVCYEKMIADGIDASYAGKLLQFGWETVTEALKFGGVTHMMDRLSNPAKIKAFDLSEELKDLMRPLYNKHMDDIISGHFSSTMMADWANDDVNLLGWREETGETAFENYPDSSLEIPEQEYFDNGILMVAMVRAGVELAFEAMTASGIVDESAYYESLHELPLIANTVARKRLYEMNVVISDTAEYGNYLFANVATPLLREKFMPLVDTDVIGRGLGAISNQVDNAKLIEVNETIRNHPVEYIGEELRGYMTDMKTIAVGG</sequence>
<organism>
    <name type="scientific">Aliivibrio salmonicida (strain LFI1238)</name>
    <name type="common">Vibrio salmonicida (strain LFI1238)</name>
    <dbReference type="NCBI Taxonomy" id="316275"/>
    <lineage>
        <taxon>Bacteria</taxon>
        <taxon>Pseudomonadati</taxon>
        <taxon>Pseudomonadota</taxon>
        <taxon>Gammaproteobacteria</taxon>
        <taxon>Vibrionales</taxon>
        <taxon>Vibrionaceae</taxon>
        <taxon>Aliivibrio</taxon>
    </lineage>
</organism>
<accession>B6EP33</accession>
<keyword id="KW-0028">Amino-acid biosynthesis</keyword>
<keyword id="KW-0100">Branched-chain amino acid biosynthesis</keyword>
<keyword id="KW-0460">Magnesium</keyword>
<keyword id="KW-0479">Metal-binding</keyword>
<keyword id="KW-0521">NADP</keyword>
<keyword id="KW-0560">Oxidoreductase</keyword>
<keyword id="KW-0677">Repeat</keyword>
<feature type="chain" id="PRO_1000190902" description="Ketol-acid reductoisomerase (NADP(+))">
    <location>
        <begin position="1"/>
        <end position="494"/>
    </location>
</feature>
<feature type="domain" description="KARI N-terminal Rossmann" evidence="2">
    <location>
        <begin position="14"/>
        <end position="208"/>
    </location>
</feature>
<feature type="domain" description="KARI C-terminal knotted 1" evidence="3">
    <location>
        <begin position="209"/>
        <end position="344"/>
    </location>
</feature>
<feature type="domain" description="KARI C-terminal knotted 2" evidence="3">
    <location>
        <begin position="345"/>
        <end position="487"/>
    </location>
</feature>
<feature type="active site" evidence="1">
    <location>
        <position position="132"/>
    </location>
</feature>
<feature type="binding site" evidence="1">
    <location>
        <begin position="45"/>
        <end position="48"/>
    </location>
    <ligand>
        <name>NADP(+)</name>
        <dbReference type="ChEBI" id="CHEBI:58349"/>
    </ligand>
</feature>
<feature type="binding site" evidence="1">
    <location>
        <position position="68"/>
    </location>
    <ligand>
        <name>NADP(+)</name>
        <dbReference type="ChEBI" id="CHEBI:58349"/>
    </ligand>
</feature>
<feature type="binding site" evidence="1">
    <location>
        <position position="76"/>
    </location>
    <ligand>
        <name>NADP(+)</name>
        <dbReference type="ChEBI" id="CHEBI:58349"/>
    </ligand>
</feature>
<feature type="binding site" evidence="1">
    <location>
        <position position="78"/>
    </location>
    <ligand>
        <name>NADP(+)</name>
        <dbReference type="ChEBI" id="CHEBI:58349"/>
    </ligand>
</feature>
<feature type="binding site" evidence="1">
    <location>
        <begin position="108"/>
        <end position="110"/>
    </location>
    <ligand>
        <name>NADP(+)</name>
        <dbReference type="ChEBI" id="CHEBI:58349"/>
    </ligand>
</feature>
<feature type="binding site" evidence="1">
    <location>
        <position position="158"/>
    </location>
    <ligand>
        <name>NADP(+)</name>
        <dbReference type="ChEBI" id="CHEBI:58349"/>
    </ligand>
</feature>
<feature type="binding site" evidence="1">
    <location>
        <position position="217"/>
    </location>
    <ligand>
        <name>Mg(2+)</name>
        <dbReference type="ChEBI" id="CHEBI:18420"/>
        <label>1</label>
    </ligand>
</feature>
<feature type="binding site" evidence="1">
    <location>
        <position position="217"/>
    </location>
    <ligand>
        <name>Mg(2+)</name>
        <dbReference type="ChEBI" id="CHEBI:18420"/>
        <label>2</label>
    </ligand>
</feature>
<feature type="binding site" evidence="1">
    <location>
        <position position="221"/>
    </location>
    <ligand>
        <name>Mg(2+)</name>
        <dbReference type="ChEBI" id="CHEBI:18420"/>
        <label>1</label>
    </ligand>
</feature>
<feature type="binding site" evidence="1">
    <location>
        <position position="389"/>
    </location>
    <ligand>
        <name>Mg(2+)</name>
        <dbReference type="ChEBI" id="CHEBI:18420"/>
        <label>2</label>
    </ligand>
</feature>
<feature type="binding site" evidence="1">
    <location>
        <position position="393"/>
    </location>
    <ligand>
        <name>Mg(2+)</name>
        <dbReference type="ChEBI" id="CHEBI:18420"/>
        <label>2</label>
    </ligand>
</feature>
<feature type="binding site" evidence="1">
    <location>
        <position position="414"/>
    </location>
    <ligand>
        <name>substrate</name>
    </ligand>
</feature>
<proteinExistence type="inferred from homology"/>